<evidence type="ECO:0000250" key="1">
    <source>
        <dbReference type="UniProtKB" id="P26214"/>
    </source>
</evidence>
<evidence type="ECO:0000255" key="2"/>
<evidence type="ECO:0000255" key="3">
    <source>
        <dbReference type="PROSITE-ProRule" id="PRU10052"/>
    </source>
</evidence>
<evidence type="ECO:0000269" key="4">
    <source>
    </source>
</evidence>
<evidence type="ECO:0000305" key="5"/>
<protein>
    <recommendedName>
        <fullName>Endopolygalacturonase II</fullName>
        <shortName>EPG-II</shortName>
        <ecNumber>3.2.1.15</ecNumber>
    </recommendedName>
    <alternativeName>
        <fullName>Pectinase 2</fullName>
    </alternativeName>
    <alternativeName>
        <fullName>Polygalacturonase II</fullName>
        <shortName>PG-II</shortName>
    </alternativeName>
    <alternativeName>
        <fullName>Polygalacturonase X2</fullName>
    </alternativeName>
</protein>
<feature type="signal peptide" evidence="2">
    <location>
        <begin position="1"/>
        <end position="21"/>
    </location>
</feature>
<feature type="propeptide" id="PRO_0000442437" evidence="4">
    <location>
        <begin position="22"/>
        <end position="27"/>
    </location>
</feature>
<feature type="chain" id="PRO_0000442438" description="Endopolygalacturonase II">
    <location>
        <begin position="28"/>
        <end position="362"/>
    </location>
</feature>
<feature type="repeat" description="PbH1 1" evidence="2">
    <location>
        <begin position="156"/>
        <end position="186"/>
    </location>
</feature>
<feature type="repeat" description="PbH1 2" evidence="2">
    <location>
        <begin position="238"/>
        <end position="259"/>
    </location>
</feature>
<feature type="repeat" description="PbH1 3" evidence="2">
    <location>
        <begin position="267"/>
        <end position="289"/>
    </location>
</feature>
<feature type="repeat" description="PbH1 4" evidence="2">
    <location>
        <begin position="301"/>
        <end position="322"/>
    </location>
</feature>
<feature type="active site" description="Proton donor" evidence="1">
    <location>
        <position position="201"/>
    </location>
</feature>
<feature type="active site" evidence="3">
    <location>
        <position position="223"/>
    </location>
</feature>
<feature type="glycosylation site" description="N-linked (GlcNAc...) (high mannose) asparagine" evidence="1">
    <location>
        <position position="240"/>
    </location>
</feature>
<feature type="disulfide bond" evidence="1">
    <location>
        <begin position="30"/>
        <end position="45"/>
    </location>
</feature>
<feature type="disulfide bond" evidence="1">
    <location>
        <begin position="203"/>
        <end position="219"/>
    </location>
</feature>
<feature type="disulfide bond" evidence="1">
    <location>
        <begin position="329"/>
        <end position="334"/>
    </location>
</feature>
<feature type="disulfide bond" evidence="1">
    <location>
        <begin position="353"/>
        <end position="362"/>
    </location>
</feature>
<sequence>MHSFASLLAYGLAASATLASASPIEARGSCTFKTAAAAKAGKAGCSTITLDNIEVPAGTTLDLTGLTSGTKVIFEGTTTFDYEEWAGPLISMSGKDITVTGASGHLINCDGARWWDGKGTSGKKKPKFFYAHGLDSSSITGLNIKNTPLMAFSVQADDITLTDITINNADGDTLGGHNTDAFDVGNSVGVNIIKPWVHNQDDCLAINSGENIWFTSGTCIGGHGLSIGSVGGRSNNVVKNVTIEHSTVSNSENAVRIKTVSGATGSVSEITYSNIVMSGISDYGVVIQQDYEDGKPTGKPTNGVTITDVKLESVTGTVDSKATDIYLLCGSGSCSDWTWDDVKVTGGKKSTACKNYPSVASC</sequence>
<organism>
    <name type="scientific">Aspergillus niger</name>
    <dbReference type="NCBI Taxonomy" id="5061"/>
    <lineage>
        <taxon>Eukaryota</taxon>
        <taxon>Fungi</taxon>
        <taxon>Dikarya</taxon>
        <taxon>Ascomycota</taxon>
        <taxon>Pezizomycotina</taxon>
        <taxon>Eurotiomycetes</taxon>
        <taxon>Eurotiomycetidae</taxon>
        <taxon>Eurotiales</taxon>
        <taxon>Aspergillaceae</taxon>
        <taxon>Aspergillus</taxon>
        <taxon>Aspergillus subgen. Circumdati</taxon>
    </lineage>
</organism>
<proteinExistence type="evidence at protein level"/>
<name>PGLR2_ASPNG</name>
<dbReference type="EC" id="3.2.1.15"/>
<dbReference type="EMBL" id="X52903">
    <property type="protein sequence ID" value="CAA37085.1"/>
    <property type="molecule type" value="mRNA"/>
</dbReference>
<dbReference type="EMBL" id="X54146">
    <property type="protein sequence ID" value="CAA38085.1"/>
    <property type="molecule type" value="Genomic_DNA"/>
</dbReference>
<dbReference type="SMR" id="P0CU55"/>
<dbReference type="PaxDb" id="5061-CADANGAP00011984"/>
<dbReference type="VEuPathDB" id="FungiDB:An15g05370"/>
<dbReference type="VEuPathDB" id="FungiDB:ASPNIDRAFT2_1143631"/>
<dbReference type="VEuPathDB" id="FungiDB:ATCC64974_28680"/>
<dbReference type="VEuPathDB" id="FungiDB:M747DRAFT_256960"/>
<dbReference type="eggNOG" id="ENOG502QTAW">
    <property type="taxonomic scope" value="Eukaryota"/>
</dbReference>
<dbReference type="GO" id="GO:0005576">
    <property type="term" value="C:extracellular region"/>
    <property type="evidence" value="ECO:0007669"/>
    <property type="project" value="UniProtKB-SubCell"/>
</dbReference>
<dbReference type="GO" id="GO:0004650">
    <property type="term" value="F:polygalacturonase activity"/>
    <property type="evidence" value="ECO:0007669"/>
    <property type="project" value="UniProtKB-EC"/>
</dbReference>
<dbReference type="GO" id="GO:0071555">
    <property type="term" value="P:cell wall organization"/>
    <property type="evidence" value="ECO:0007669"/>
    <property type="project" value="UniProtKB-KW"/>
</dbReference>
<dbReference type="GO" id="GO:0045490">
    <property type="term" value="P:pectin catabolic process"/>
    <property type="evidence" value="ECO:0007669"/>
    <property type="project" value="UniProtKB-ARBA"/>
</dbReference>
<dbReference type="FunFam" id="2.160.20.10:FF:000002">
    <property type="entry name" value="Endopolygalacturonase D"/>
    <property type="match status" value="1"/>
</dbReference>
<dbReference type="Gene3D" id="2.160.20.10">
    <property type="entry name" value="Single-stranded right-handed beta-helix, Pectin lyase-like"/>
    <property type="match status" value="1"/>
</dbReference>
<dbReference type="InterPro" id="IPR000743">
    <property type="entry name" value="Glyco_hydro_28"/>
</dbReference>
<dbReference type="InterPro" id="IPR050434">
    <property type="entry name" value="Glycosyl_hydrlase_28"/>
</dbReference>
<dbReference type="InterPro" id="IPR006626">
    <property type="entry name" value="PbH1"/>
</dbReference>
<dbReference type="InterPro" id="IPR012334">
    <property type="entry name" value="Pectin_lyas_fold"/>
</dbReference>
<dbReference type="InterPro" id="IPR011050">
    <property type="entry name" value="Pectin_lyase_fold/virulence"/>
</dbReference>
<dbReference type="PANTHER" id="PTHR31884:SF13">
    <property type="entry name" value="ENDOPOLYGALACTURONASE B"/>
    <property type="match status" value="1"/>
</dbReference>
<dbReference type="PANTHER" id="PTHR31884">
    <property type="entry name" value="POLYGALACTURONASE"/>
    <property type="match status" value="1"/>
</dbReference>
<dbReference type="Pfam" id="PF00295">
    <property type="entry name" value="Glyco_hydro_28"/>
    <property type="match status" value="1"/>
</dbReference>
<dbReference type="SMART" id="SM00710">
    <property type="entry name" value="PbH1"/>
    <property type="match status" value="4"/>
</dbReference>
<dbReference type="SUPFAM" id="SSF51126">
    <property type="entry name" value="Pectin lyase-like"/>
    <property type="match status" value="1"/>
</dbReference>
<dbReference type="PROSITE" id="PS00502">
    <property type="entry name" value="POLYGALACTURONASE"/>
    <property type="match status" value="1"/>
</dbReference>
<reference key="1">
    <citation type="journal article" date="1990" name="Biochim. Biophys. Acta">
        <title>Cloning and DNA sequence analysis of a polygalacturonase cDNA from Aspergillus niger RH5344.</title>
        <authorList>
            <person name="Ruttowski E."/>
            <person name="Labitzke R."/>
            <person name="Khanh N.Q."/>
            <person name="Loeffler F."/>
            <person name="Gottschalk M."/>
            <person name="Jany K.-D."/>
        </authorList>
    </citation>
    <scope>NUCLEOTIDE SEQUENCE [MRNA]</scope>
    <scope>PROTEIN SEQUENCE OF 28-57</scope>
    <source>
        <strain>RH 5344</strain>
    </source>
</reference>
<reference key="2">
    <citation type="journal article" date="1991" name="Mol. Microbiol.">
        <title>Characterization of a polygalacturonase gene of Aspergillus niger RH5344.</title>
        <authorList>
            <person name="Ruttkowski E."/>
            <person name="Khanh N.Q."/>
            <person name="Wientjes F.J."/>
            <person name="Gottschalk M."/>
        </authorList>
    </citation>
    <scope>NUCLEOTIDE SEQUENCE [GENOMIC DNA]</scope>
    <source>
        <strain>RH 5344</strain>
    </source>
</reference>
<keyword id="KW-0961">Cell wall biogenesis/degradation</keyword>
<keyword id="KW-0903">Direct protein sequencing</keyword>
<keyword id="KW-1015">Disulfide bond</keyword>
<keyword id="KW-0325">Glycoprotein</keyword>
<keyword id="KW-0326">Glycosidase</keyword>
<keyword id="KW-0378">Hydrolase</keyword>
<keyword id="KW-0677">Repeat</keyword>
<keyword id="KW-0964">Secreted</keyword>
<keyword id="KW-0732">Signal</keyword>
<keyword id="KW-0865">Zymogen</keyword>
<comment type="function">
    <text>Involved in maceration and soft-rotting of plant tissue. Hydrolyzes the 1,4-alpha glycosidic bonds of de-esterified pectate in the smooth region of the plant cell wall.</text>
</comment>
<comment type="catalytic activity">
    <reaction>
        <text>(1,4-alpha-D-galacturonosyl)n+m + H2O = (1,4-alpha-D-galacturonosyl)n + (1,4-alpha-D-galacturonosyl)m.</text>
        <dbReference type="EC" id="3.2.1.15"/>
    </reaction>
</comment>
<comment type="subcellular location">
    <subcellularLocation>
        <location evidence="5">Secreted</location>
    </subcellularLocation>
</comment>
<comment type="similarity">
    <text evidence="5">Belongs to the glycosyl hydrolase 28 family.</text>
</comment>
<accession>P0CU55</accession>
<accession>P19805</accession>